<dbReference type="EC" id="1.2.1.38" evidence="1"/>
<dbReference type="EMBL" id="CP000025">
    <property type="protein sequence ID" value="AAW34867.1"/>
    <property type="molecule type" value="Genomic_DNA"/>
</dbReference>
<dbReference type="RefSeq" id="WP_002857251.1">
    <property type="nucleotide sequence ID" value="NC_003912.7"/>
</dbReference>
<dbReference type="SMR" id="Q5HWN8"/>
<dbReference type="KEGG" id="cjr:CJE0275"/>
<dbReference type="HOGENOM" id="CLU_006384_0_1_7"/>
<dbReference type="UniPathway" id="UPA00068">
    <property type="reaction ID" value="UER00108"/>
</dbReference>
<dbReference type="GO" id="GO:0005737">
    <property type="term" value="C:cytoplasm"/>
    <property type="evidence" value="ECO:0007669"/>
    <property type="project" value="UniProtKB-SubCell"/>
</dbReference>
<dbReference type="GO" id="GO:0003942">
    <property type="term" value="F:N-acetyl-gamma-glutamyl-phosphate reductase activity"/>
    <property type="evidence" value="ECO:0007669"/>
    <property type="project" value="UniProtKB-UniRule"/>
</dbReference>
<dbReference type="GO" id="GO:0051287">
    <property type="term" value="F:NAD binding"/>
    <property type="evidence" value="ECO:0007669"/>
    <property type="project" value="InterPro"/>
</dbReference>
<dbReference type="GO" id="GO:0070401">
    <property type="term" value="F:NADP+ binding"/>
    <property type="evidence" value="ECO:0007669"/>
    <property type="project" value="InterPro"/>
</dbReference>
<dbReference type="GO" id="GO:0006526">
    <property type="term" value="P:L-arginine biosynthetic process"/>
    <property type="evidence" value="ECO:0007669"/>
    <property type="project" value="UniProtKB-UniRule"/>
</dbReference>
<dbReference type="CDD" id="cd23934">
    <property type="entry name" value="AGPR_1_C"/>
    <property type="match status" value="1"/>
</dbReference>
<dbReference type="CDD" id="cd17895">
    <property type="entry name" value="AGPR_1_N"/>
    <property type="match status" value="1"/>
</dbReference>
<dbReference type="FunFam" id="3.30.360.10:FF:000014">
    <property type="entry name" value="N-acetyl-gamma-glutamyl-phosphate reductase"/>
    <property type="match status" value="1"/>
</dbReference>
<dbReference type="Gene3D" id="3.30.360.10">
    <property type="entry name" value="Dihydrodipicolinate Reductase, domain 2"/>
    <property type="match status" value="1"/>
</dbReference>
<dbReference type="Gene3D" id="3.40.50.720">
    <property type="entry name" value="NAD(P)-binding Rossmann-like Domain"/>
    <property type="match status" value="1"/>
</dbReference>
<dbReference type="HAMAP" id="MF_00150">
    <property type="entry name" value="ArgC_type1"/>
    <property type="match status" value="1"/>
</dbReference>
<dbReference type="InterPro" id="IPR023013">
    <property type="entry name" value="AGPR_AS"/>
</dbReference>
<dbReference type="InterPro" id="IPR000706">
    <property type="entry name" value="AGPR_type-1"/>
</dbReference>
<dbReference type="InterPro" id="IPR036291">
    <property type="entry name" value="NAD(P)-bd_dom_sf"/>
</dbReference>
<dbReference type="InterPro" id="IPR050085">
    <property type="entry name" value="NAGSA_dehydrogenase"/>
</dbReference>
<dbReference type="InterPro" id="IPR000534">
    <property type="entry name" value="Semialdehyde_DH_NAD-bd"/>
</dbReference>
<dbReference type="NCBIfam" id="TIGR01850">
    <property type="entry name" value="argC"/>
    <property type="match status" value="1"/>
</dbReference>
<dbReference type="PANTHER" id="PTHR32338:SF10">
    <property type="entry name" value="N-ACETYL-GAMMA-GLUTAMYL-PHOSPHATE REDUCTASE, CHLOROPLASTIC-RELATED"/>
    <property type="match status" value="1"/>
</dbReference>
<dbReference type="PANTHER" id="PTHR32338">
    <property type="entry name" value="N-ACETYL-GAMMA-GLUTAMYL-PHOSPHATE REDUCTASE, CHLOROPLASTIC-RELATED-RELATED"/>
    <property type="match status" value="1"/>
</dbReference>
<dbReference type="Pfam" id="PF01118">
    <property type="entry name" value="Semialdhyde_dh"/>
    <property type="match status" value="1"/>
</dbReference>
<dbReference type="Pfam" id="PF22698">
    <property type="entry name" value="Semialdhyde_dhC_1"/>
    <property type="match status" value="1"/>
</dbReference>
<dbReference type="SMART" id="SM00859">
    <property type="entry name" value="Semialdhyde_dh"/>
    <property type="match status" value="1"/>
</dbReference>
<dbReference type="SUPFAM" id="SSF55347">
    <property type="entry name" value="Glyceraldehyde-3-phosphate dehydrogenase-like, C-terminal domain"/>
    <property type="match status" value="1"/>
</dbReference>
<dbReference type="SUPFAM" id="SSF51735">
    <property type="entry name" value="NAD(P)-binding Rossmann-fold domains"/>
    <property type="match status" value="1"/>
</dbReference>
<dbReference type="PROSITE" id="PS01224">
    <property type="entry name" value="ARGC"/>
    <property type="match status" value="1"/>
</dbReference>
<evidence type="ECO:0000255" key="1">
    <source>
        <dbReference type="HAMAP-Rule" id="MF_00150"/>
    </source>
</evidence>
<accession>Q5HWN8</accession>
<gene>
    <name evidence="1" type="primary">argC</name>
    <name type="ordered locus">CJE0275</name>
</gene>
<name>ARGC_CAMJR</name>
<comment type="function">
    <text evidence="1">Catalyzes the NADPH-dependent reduction of N-acetyl-5-glutamyl phosphate to yield N-acetyl-L-glutamate 5-semialdehyde.</text>
</comment>
<comment type="catalytic activity">
    <reaction evidence="1">
        <text>N-acetyl-L-glutamate 5-semialdehyde + phosphate + NADP(+) = N-acetyl-L-glutamyl 5-phosphate + NADPH + H(+)</text>
        <dbReference type="Rhea" id="RHEA:21588"/>
        <dbReference type="ChEBI" id="CHEBI:15378"/>
        <dbReference type="ChEBI" id="CHEBI:29123"/>
        <dbReference type="ChEBI" id="CHEBI:43474"/>
        <dbReference type="ChEBI" id="CHEBI:57783"/>
        <dbReference type="ChEBI" id="CHEBI:57936"/>
        <dbReference type="ChEBI" id="CHEBI:58349"/>
        <dbReference type="EC" id="1.2.1.38"/>
    </reaction>
</comment>
<comment type="pathway">
    <text evidence="1">Amino-acid biosynthesis; L-arginine biosynthesis; N(2)-acetyl-L-ornithine from L-glutamate: step 3/4.</text>
</comment>
<comment type="subcellular location">
    <subcellularLocation>
        <location evidence="1">Cytoplasm</location>
    </subcellularLocation>
</comment>
<comment type="similarity">
    <text evidence="1">Belongs to the NAGSA dehydrogenase family. Type 1 subfamily.</text>
</comment>
<reference key="1">
    <citation type="journal article" date="2005" name="PLoS Biol.">
        <title>Major structural differences and novel potential virulence mechanisms from the genomes of multiple Campylobacter species.</title>
        <authorList>
            <person name="Fouts D.E."/>
            <person name="Mongodin E.F."/>
            <person name="Mandrell R.E."/>
            <person name="Miller W.G."/>
            <person name="Rasko D.A."/>
            <person name="Ravel J."/>
            <person name="Brinkac L.M."/>
            <person name="DeBoy R.T."/>
            <person name="Parker C.T."/>
            <person name="Daugherty S.C."/>
            <person name="Dodson R.J."/>
            <person name="Durkin A.S."/>
            <person name="Madupu R."/>
            <person name="Sullivan S.A."/>
            <person name="Shetty J.U."/>
            <person name="Ayodeji M.A."/>
            <person name="Shvartsbeyn A."/>
            <person name="Schatz M.C."/>
            <person name="Badger J.H."/>
            <person name="Fraser C.M."/>
            <person name="Nelson K.E."/>
        </authorList>
    </citation>
    <scope>NUCLEOTIDE SEQUENCE [LARGE SCALE GENOMIC DNA]</scope>
    <source>
        <strain>RM1221</strain>
    </source>
</reference>
<feature type="chain" id="PRO_0000112394" description="N-acetyl-gamma-glutamyl-phosphate reductase">
    <location>
        <begin position="1"/>
        <end position="342"/>
    </location>
</feature>
<feature type="active site" evidence="1">
    <location>
        <position position="147"/>
    </location>
</feature>
<proteinExistence type="inferred from homology"/>
<organism>
    <name type="scientific">Campylobacter jejuni (strain RM1221)</name>
    <dbReference type="NCBI Taxonomy" id="195099"/>
    <lineage>
        <taxon>Bacteria</taxon>
        <taxon>Pseudomonadati</taxon>
        <taxon>Campylobacterota</taxon>
        <taxon>Epsilonproteobacteria</taxon>
        <taxon>Campylobacterales</taxon>
        <taxon>Campylobacteraceae</taxon>
        <taxon>Campylobacter</taxon>
    </lineage>
</organism>
<sequence length="342" mass="38886">MKIKVGILGASGYAGNELVRILLNHPKVEISYLGSSSSVGQNYQDLYPNTPLNLCFENKNLDELELDLLFLATPHEFSAKLLNENLLKKMKIIDLSADFRLKNPKDYELWYKFTHPNQELLQNAVYGLCELYKEEIKKASLVANPGCYTTCSILSLYPLFKEKIIDFSSVIIDAKSGVSGAGRSAKVENLFCEVNENIKAYNLALHRHTPEIEEHLSYAAKKKITLQFTPHLVSMQRGILISAYANLKEDLQEQDIRDIYTKYYQNNKFIRLLPPQSLPQTRWVKSSNFADINFSVDQRTKRVIVLGAIDNLIKGAAGQAVQNMNLMFDFDEDEGLKFFANL</sequence>
<keyword id="KW-0028">Amino-acid biosynthesis</keyword>
<keyword id="KW-0055">Arginine biosynthesis</keyword>
<keyword id="KW-0963">Cytoplasm</keyword>
<keyword id="KW-0521">NADP</keyword>
<keyword id="KW-0560">Oxidoreductase</keyword>
<protein>
    <recommendedName>
        <fullName evidence="1">N-acetyl-gamma-glutamyl-phosphate reductase</fullName>
        <shortName evidence="1">AGPR</shortName>
        <ecNumber evidence="1">1.2.1.38</ecNumber>
    </recommendedName>
    <alternativeName>
        <fullName evidence="1">N-acetyl-glutamate semialdehyde dehydrogenase</fullName>
        <shortName evidence="1">NAGSA dehydrogenase</shortName>
    </alternativeName>
</protein>